<evidence type="ECO:0000255" key="1">
    <source>
        <dbReference type="HAMAP-Rule" id="MF_01131"/>
    </source>
</evidence>
<dbReference type="EMBL" id="CP000033">
    <property type="protein sequence ID" value="AAV42289.1"/>
    <property type="molecule type" value="Genomic_DNA"/>
</dbReference>
<dbReference type="RefSeq" id="WP_003549143.1">
    <property type="nucleotide sequence ID" value="NC_006814.3"/>
</dbReference>
<dbReference type="RefSeq" id="YP_193320.1">
    <property type="nucleotide sequence ID" value="NC_006814.3"/>
</dbReference>
<dbReference type="SMR" id="Q5FLY5"/>
<dbReference type="STRING" id="272621.LBA0398"/>
<dbReference type="KEGG" id="lac:LBA0398"/>
<dbReference type="PATRIC" id="fig|272621.13.peg.384"/>
<dbReference type="eggNOG" id="COG2344">
    <property type="taxonomic scope" value="Bacteria"/>
</dbReference>
<dbReference type="HOGENOM" id="CLU_061534_1_1_9"/>
<dbReference type="OrthoDB" id="9784760at2"/>
<dbReference type="BioCyc" id="LACI272621:G1G49-392-MONOMER"/>
<dbReference type="Proteomes" id="UP000006381">
    <property type="component" value="Chromosome"/>
</dbReference>
<dbReference type="GO" id="GO:0005737">
    <property type="term" value="C:cytoplasm"/>
    <property type="evidence" value="ECO:0007669"/>
    <property type="project" value="UniProtKB-SubCell"/>
</dbReference>
<dbReference type="GO" id="GO:0003677">
    <property type="term" value="F:DNA binding"/>
    <property type="evidence" value="ECO:0007669"/>
    <property type="project" value="UniProtKB-UniRule"/>
</dbReference>
<dbReference type="GO" id="GO:0003700">
    <property type="term" value="F:DNA-binding transcription factor activity"/>
    <property type="evidence" value="ECO:0007669"/>
    <property type="project" value="UniProtKB-UniRule"/>
</dbReference>
<dbReference type="GO" id="GO:0045892">
    <property type="term" value="P:negative regulation of DNA-templated transcription"/>
    <property type="evidence" value="ECO:0007669"/>
    <property type="project" value="InterPro"/>
</dbReference>
<dbReference type="GO" id="GO:0051775">
    <property type="term" value="P:response to redox state"/>
    <property type="evidence" value="ECO:0007669"/>
    <property type="project" value="InterPro"/>
</dbReference>
<dbReference type="Gene3D" id="3.40.50.720">
    <property type="entry name" value="NAD(P)-binding Rossmann-like Domain"/>
    <property type="match status" value="1"/>
</dbReference>
<dbReference type="Gene3D" id="1.10.10.10">
    <property type="entry name" value="Winged helix-like DNA-binding domain superfamily/Winged helix DNA-binding domain"/>
    <property type="match status" value="1"/>
</dbReference>
<dbReference type="HAMAP" id="MF_01131">
    <property type="entry name" value="Rex"/>
    <property type="match status" value="1"/>
</dbReference>
<dbReference type="InterPro" id="IPR003781">
    <property type="entry name" value="CoA-bd"/>
</dbReference>
<dbReference type="InterPro" id="IPR036291">
    <property type="entry name" value="NAD(P)-bd_dom_sf"/>
</dbReference>
<dbReference type="InterPro" id="IPR009718">
    <property type="entry name" value="Rex_DNA-bd_C_dom"/>
</dbReference>
<dbReference type="InterPro" id="IPR022876">
    <property type="entry name" value="Tscrpt_rep_Rex"/>
</dbReference>
<dbReference type="InterPro" id="IPR036388">
    <property type="entry name" value="WH-like_DNA-bd_sf"/>
</dbReference>
<dbReference type="InterPro" id="IPR036390">
    <property type="entry name" value="WH_DNA-bd_sf"/>
</dbReference>
<dbReference type="NCBIfam" id="NF003989">
    <property type="entry name" value="PRK05472.1-3"/>
    <property type="match status" value="1"/>
</dbReference>
<dbReference type="NCBIfam" id="NF003991">
    <property type="entry name" value="PRK05472.1-5"/>
    <property type="match status" value="1"/>
</dbReference>
<dbReference type="NCBIfam" id="NF003994">
    <property type="entry name" value="PRK05472.2-3"/>
    <property type="match status" value="1"/>
</dbReference>
<dbReference type="NCBIfam" id="NF003995">
    <property type="entry name" value="PRK05472.2-4"/>
    <property type="match status" value="1"/>
</dbReference>
<dbReference type="NCBIfam" id="NF003996">
    <property type="entry name" value="PRK05472.2-5"/>
    <property type="match status" value="1"/>
</dbReference>
<dbReference type="PANTHER" id="PTHR35786">
    <property type="entry name" value="REDOX-SENSING TRANSCRIPTIONAL REPRESSOR REX"/>
    <property type="match status" value="1"/>
</dbReference>
<dbReference type="PANTHER" id="PTHR35786:SF1">
    <property type="entry name" value="REDOX-SENSING TRANSCRIPTIONAL REPRESSOR REX 1"/>
    <property type="match status" value="1"/>
</dbReference>
<dbReference type="Pfam" id="PF02629">
    <property type="entry name" value="CoA_binding"/>
    <property type="match status" value="1"/>
</dbReference>
<dbReference type="Pfam" id="PF06971">
    <property type="entry name" value="Put_DNA-bind_N"/>
    <property type="match status" value="1"/>
</dbReference>
<dbReference type="SMART" id="SM00881">
    <property type="entry name" value="CoA_binding"/>
    <property type="match status" value="1"/>
</dbReference>
<dbReference type="SUPFAM" id="SSF51735">
    <property type="entry name" value="NAD(P)-binding Rossmann-fold domains"/>
    <property type="match status" value="1"/>
</dbReference>
<dbReference type="SUPFAM" id="SSF46785">
    <property type="entry name" value="Winged helix' DNA-binding domain"/>
    <property type="match status" value="1"/>
</dbReference>
<keyword id="KW-0963">Cytoplasm</keyword>
<keyword id="KW-0238">DNA-binding</keyword>
<keyword id="KW-0520">NAD</keyword>
<keyword id="KW-1185">Reference proteome</keyword>
<keyword id="KW-0678">Repressor</keyword>
<keyword id="KW-0804">Transcription</keyword>
<keyword id="KW-0805">Transcription regulation</keyword>
<feature type="chain" id="PRO_1000065402" description="Redox-sensing transcriptional repressor Rex">
    <location>
        <begin position="1"/>
        <end position="211"/>
    </location>
</feature>
<feature type="DNA-binding region" description="H-T-H motif" evidence="1">
    <location>
        <begin position="16"/>
        <end position="55"/>
    </location>
</feature>
<feature type="binding site" evidence="1">
    <location>
        <begin position="90"/>
        <end position="95"/>
    </location>
    <ligand>
        <name>NAD(+)</name>
        <dbReference type="ChEBI" id="CHEBI:57540"/>
    </ligand>
</feature>
<proteinExistence type="inferred from homology"/>
<accession>Q5FLY5</accession>
<reference key="1">
    <citation type="journal article" date="2005" name="Proc. Natl. Acad. Sci. U.S.A.">
        <title>Complete genome sequence of the probiotic lactic acid bacterium Lactobacillus acidophilus NCFM.</title>
        <authorList>
            <person name="Altermann E."/>
            <person name="Russell W.M."/>
            <person name="Azcarate-Peril M.A."/>
            <person name="Barrangou R."/>
            <person name="Buck B.L."/>
            <person name="McAuliffe O."/>
            <person name="Souther N."/>
            <person name="Dobson A."/>
            <person name="Duong T."/>
            <person name="Callanan M."/>
            <person name="Lick S."/>
            <person name="Hamrick A."/>
            <person name="Cano R."/>
            <person name="Klaenhammer T.R."/>
        </authorList>
    </citation>
    <scope>NUCLEOTIDE SEQUENCE [LARGE SCALE GENOMIC DNA]</scope>
    <source>
        <strain>ATCC 700396 / NCK56 / N2 / NCFM</strain>
    </source>
</reference>
<protein>
    <recommendedName>
        <fullName evidence="1">Redox-sensing transcriptional repressor Rex</fullName>
    </recommendedName>
</protein>
<name>REX_LACAC</name>
<sequence length="211" mass="23637">MEKIKIPKATAKRLPLYYRYLLILNEEGKDKVSSTELSEAVQVDSASIRRDFSYFGALGKRGYGYDVKNLLSFFKKILNQDTLTNVALIGVGNLGRALLNYNFKRSNNIRISCAFDINKEITGRILSGVPVYDMEDLKQQLSDQQISIAILTVPSTAAQRTTDEMVDAGVKGIMNFTPIRLSAPADVRVQNVDLATELQTLIYFLDSEKEN</sequence>
<organism>
    <name type="scientific">Lactobacillus acidophilus (strain ATCC 700396 / NCK56 / N2 / NCFM)</name>
    <dbReference type="NCBI Taxonomy" id="272621"/>
    <lineage>
        <taxon>Bacteria</taxon>
        <taxon>Bacillati</taxon>
        <taxon>Bacillota</taxon>
        <taxon>Bacilli</taxon>
        <taxon>Lactobacillales</taxon>
        <taxon>Lactobacillaceae</taxon>
        <taxon>Lactobacillus</taxon>
    </lineage>
</organism>
<gene>
    <name evidence="1" type="primary">rex</name>
    <name type="ordered locus">LBA0398</name>
</gene>
<comment type="function">
    <text evidence="1">Modulates transcription in response to changes in cellular NADH/NAD(+) redox state.</text>
</comment>
<comment type="subunit">
    <text evidence="1">Homodimer.</text>
</comment>
<comment type="subcellular location">
    <subcellularLocation>
        <location evidence="1">Cytoplasm</location>
    </subcellularLocation>
</comment>
<comment type="similarity">
    <text evidence="1">Belongs to the transcriptional regulatory Rex family.</text>
</comment>